<accession>Q96K62</accession>
<reference key="1">
    <citation type="journal article" date="2004" name="Nat. Genet.">
        <title>Complete sequencing and characterization of 21,243 full-length human cDNAs.</title>
        <authorList>
            <person name="Ota T."/>
            <person name="Suzuki Y."/>
            <person name="Nishikawa T."/>
            <person name="Otsuki T."/>
            <person name="Sugiyama T."/>
            <person name="Irie R."/>
            <person name="Wakamatsu A."/>
            <person name="Hayashi K."/>
            <person name="Sato H."/>
            <person name="Nagai K."/>
            <person name="Kimura K."/>
            <person name="Makita H."/>
            <person name="Sekine M."/>
            <person name="Obayashi M."/>
            <person name="Nishi T."/>
            <person name="Shibahara T."/>
            <person name="Tanaka T."/>
            <person name="Ishii S."/>
            <person name="Yamamoto J."/>
            <person name="Saito K."/>
            <person name="Kawai Y."/>
            <person name="Isono Y."/>
            <person name="Nakamura Y."/>
            <person name="Nagahari K."/>
            <person name="Murakami K."/>
            <person name="Yasuda T."/>
            <person name="Iwayanagi T."/>
            <person name="Wagatsuma M."/>
            <person name="Shiratori A."/>
            <person name="Sudo H."/>
            <person name="Hosoiri T."/>
            <person name="Kaku Y."/>
            <person name="Kodaira H."/>
            <person name="Kondo H."/>
            <person name="Sugawara M."/>
            <person name="Takahashi M."/>
            <person name="Kanda K."/>
            <person name="Yokoi T."/>
            <person name="Furuya T."/>
            <person name="Kikkawa E."/>
            <person name="Omura Y."/>
            <person name="Abe K."/>
            <person name="Kamihara K."/>
            <person name="Katsuta N."/>
            <person name="Sato K."/>
            <person name="Tanikawa M."/>
            <person name="Yamazaki M."/>
            <person name="Ninomiya K."/>
            <person name="Ishibashi T."/>
            <person name="Yamashita H."/>
            <person name="Murakawa K."/>
            <person name="Fujimori K."/>
            <person name="Tanai H."/>
            <person name="Kimata M."/>
            <person name="Watanabe M."/>
            <person name="Hiraoka S."/>
            <person name="Chiba Y."/>
            <person name="Ishida S."/>
            <person name="Ono Y."/>
            <person name="Takiguchi S."/>
            <person name="Watanabe S."/>
            <person name="Yosida M."/>
            <person name="Hotuta T."/>
            <person name="Kusano J."/>
            <person name="Kanehori K."/>
            <person name="Takahashi-Fujii A."/>
            <person name="Hara H."/>
            <person name="Tanase T.-O."/>
            <person name="Nomura Y."/>
            <person name="Togiya S."/>
            <person name="Komai F."/>
            <person name="Hara R."/>
            <person name="Takeuchi K."/>
            <person name="Arita M."/>
            <person name="Imose N."/>
            <person name="Musashino K."/>
            <person name="Yuuki H."/>
            <person name="Oshima A."/>
            <person name="Sasaki N."/>
            <person name="Aotsuka S."/>
            <person name="Yoshikawa Y."/>
            <person name="Matsunawa H."/>
            <person name="Ichihara T."/>
            <person name="Shiohata N."/>
            <person name="Sano S."/>
            <person name="Moriya S."/>
            <person name="Momiyama H."/>
            <person name="Satoh N."/>
            <person name="Takami S."/>
            <person name="Terashima Y."/>
            <person name="Suzuki O."/>
            <person name="Nakagawa S."/>
            <person name="Senoh A."/>
            <person name="Mizoguchi H."/>
            <person name="Goto Y."/>
            <person name="Shimizu F."/>
            <person name="Wakebe H."/>
            <person name="Hishigaki H."/>
            <person name="Watanabe T."/>
            <person name="Sugiyama A."/>
            <person name="Takemoto M."/>
            <person name="Kawakami B."/>
            <person name="Yamazaki M."/>
            <person name="Watanabe K."/>
            <person name="Kumagai A."/>
            <person name="Itakura S."/>
            <person name="Fukuzumi Y."/>
            <person name="Fujimori Y."/>
            <person name="Komiyama M."/>
            <person name="Tashiro H."/>
            <person name="Tanigami A."/>
            <person name="Fujiwara T."/>
            <person name="Ono T."/>
            <person name="Yamada K."/>
            <person name="Fujii Y."/>
            <person name="Ozaki K."/>
            <person name="Hirao M."/>
            <person name="Ohmori Y."/>
            <person name="Kawabata A."/>
            <person name="Hikiji T."/>
            <person name="Kobatake N."/>
            <person name="Inagaki H."/>
            <person name="Ikema Y."/>
            <person name="Okamoto S."/>
            <person name="Okitani R."/>
            <person name="Kawakami T."/>
            <person name="Noguchi S."/>
            <person name="Itoh T."/>
            <person name="Shigeta K."/>
            <person name="Senba T."/>
            <person name="Matsumura K."/>
            <person name="Nakajima Y."/>
            <person name="Mizuno T."/>
            <person name="Morinaga M."/>
            <person name="Sasaki M."/>
            <person name="Togashi T."/>
            <person name="Oyama M."/>
            <person name="Hata H."/>
            <person name="Watanabe M."/>
            <person name="Komatsu T."/>
            <person name="Mizushima-Sugano J."/>
            <person name="Satoh T."/>
            <person name="Shirai Y."/>
            <person name="Takahashi Y."/>
            <person name="Nakagawa K."/>
            <person name="Okumura K."/>
            <person name="Nagase T."/>
            <person name="Nomura N."/>
            <person name="Kikuchi H."/>
            <person name="Masuho Y."/>
            <person name="Yamashita R."/>
            <person name="Nakai K."/>
            <person name="Yada T."/>
            <person name="Nakamura Y."/>
            <person name="Ohara O."/>
            <person name="Isogai T."/>
            <person name="Sugano S."/>
        </authorList>
    </citation>
    <scope>NUCLEOTIDE SEQUENCE [LARGE SCALE MRNA]</scope>
    <source>
        <tissue>Mammary gland</tissue>
    </source>
</reference>
<reference key="2">
    <citation type="journal article" date="2004" name="Genome Res.">
        <title>The status, quality, and expansion of the NIH full-length cDNA project: the Mammalian Gene Collection (MGC).</title>
        <authorList>
            <consortium name="The MGC Project Team"/>
        </authorList>
    </citation>
    <scope>NUCLEOTIDE SEQUENCE [LARGE SCALE MRNA]</scope>
    <source>
        <tissue>Cervix</tissue>
    </source>
</reference>
<comment type="function">
    <text evidence="1 5">May be involved in transcriptional regulation (Probable). In the central nervous system, may play a role in glial cell differentiation (By similarity).</text>
</comment>
<comment type="interaction">
    <interactant intactId="EBI-714373">
        <id>Q96K62</id>
    </interactant>
    <interactant intactId="EBI-2949658">
        <id>O95429</id>
        <label>BAG4</label>
    </interactant>
    <organismsDiffer>false</organismsDiffer>
    <experiments>3</experiments>
</comment>
<comment type="subcellular location">
    <subcellularLocation>
        <location evidence="5">Nucleus</location>
    </subcellularLocation>
</comment>
<comment type="similarity">
    <text evidence="5">Belongs to the krueppel C2H2-type zinc-finger protein family.</text>
</comment>
<sequence>MAAAEAVHHIHLQNFSRSLLETLNGQRLGGHFCDVTVRIREASLRAHRCVLAAGSPFFQDKLLLGHSEIRVPPVVPAQTVRQLVEFLYSGSLVVAQGEALQVLTAASVLRIQTVIDECTQIIARARAPGTSAPTPLPTPVPPPLAPAQLRHRLRHLLAARPPGHPGAAHSRKQRQPARLQLPAPPTPAKAEGPDADPSLSAAPDDRGDEDDEESDDETDGEDGEGGGPGEGQAPPSFPDCAAGFLTAAADSACEEPPAPTGLADYSGAGRDFLRGAGSAEDVFPDSYVSTWHDEDGAVPEGCPTETPVQPDCILSGSRPPGVKTPGPPVALFPFHLGAPGPPAPPPSAPSGPAPAPPPAFYPTLQPEAAPSTQLGEVPAPSAAPTTAPSGTPARTPGAEPPTYECSHCRKTFSSRKNYTKHMFIHSGEKPHQCAVCWRSFSLRDYLLKHMVTHTGVRAFQCAVCAKRFTQKSSLNVHMRTHRPERAPCPACGKVFSHRALLERHLAAHPAP</sequence>
<feature type="chain" id="PRO_0000047619" description="Zinc finger and BTB domain-containing protein 45">
    <location>
        <begin position="1"/>
        <end position="511"/>
    </location>
</feature>
<feature type="domain" description="BTB" evidence="2">
    <location>
        <begin position="33"/>
        <end position="96"/>
    </location>
</feature>
<feature type="zinc finger region" description="C2H2-type 1" evidence="3">
    <location>
        <begin position="403"/>
        <end position="425"/>
    </location>
</feature>
<feature type="zinc finger region" description="C2H2-type 2" evidence="3">
    <location>
        <begin position="431"/>
        <end position="453"/>
    </location>
</feature>
<feature type="zinc finger region" description="C2H2-type 3" evidence="3">
    <location>
        <begin position="459"/>
        <end position="481"/>
    </location>
</feature>
<feature type="zinc finger region" description="C2H2-type 4" evidence="3">
    <location>
        <begin position="486"/>
        <end position="508"/>
    </location>
</feature>
<feature type="region of interest" description="Disordered" evidence="4">
    <location>
        <begin position="159"/>
        <end position="241"/>
    </location>
</feature>
<feature type="region of interest" description="Disordered" evidence="4">
    <location>
        <begin position="294"/>
        <end position="403"/>
    </location>
</feature>
<feature type="compositionally biased region" description="Low complexity" evidence="4">
    <location>
        <begin position="159"/>
        <end position="168"/>
    </location>
</feature>
<feature type="compositionally biased region" description="Acidic residues" evidence="4">
    <location>
        <begin position="206"/>
        <end position="224"/>
    </location>
</feature>
<feature type="compositionally biased region" description="Pro residues" evidence="4">
    <location>
        <begin position="339"/>
        <end position="360"/>
    </location>
</feature>
<feature type="compositionally biased region" description="Low complexity" evidence="4">
    <location>
        <begin position="378"/>
        <end position="397"/>
    </location>
</feature>
<feature type="sequence variant" id="VAR_052924" description="In dbSNP:rs35430780.">
    <original>D</original>
    <variation>E</variation>
    <location>
        <position position="293"/>
    </location>
</feature>
<gene>
    <name type="primary">ZBTB45</name>
    <name type="synonym">ZNF499</name>
</gene>
<proteinExistence type="evidence at protein level"/>
<organism>
    <name type="scientific">Homo sapiens</name>
    <name type="common">Human</name>
    <dbReference type="NCBI Taxonomy" id="9606"/>
    <lineage>
        <taxon>Eukaryota</taxon>
        <taxon>Metazoa</taxon>
        <taxon>Chordata</taxon>
        <taxon>Craniata</taxon>
        <taxon>Vertebrata</taxon>
        <taxon>Euteleostomi</taxon>
        <taxon>Mammalia</taxon>
        <taxon>Eutheria</taxon>
        <taxon>Euarchontoglires</taxon>
        <taxon>Primates</taxon>
        <taxon>Haplorrhini</taxon>
        <taxon>Catarrhini</taxon>
        <taxon>Hominidae</taxon>
        <taxon>Homo</taxon>
    </lineage>
</organism>
<dbReference type="EMBL" id="AK027392">
    <property type="protein sequence ID" value="BAB55079.1"/>
    <property type="molecule type" value="mRNA"/>
</dbReference>
<dbReference type="EMBL" id="BC024738">
    <property type="protein sequence ID" value="AAH24738.1"/>
    <property type="molecule type" value="mRNA"/>
</dbReference>
<dbReference type="CCDS" id="CCDS12984.1"/>
<dbReference type="RefSeq" id="NP_001303907.1">
    <property type="nucleotide sequence ID" value="NM_001316978.2"/>
</dbReference>
<dbReference type="RefSeq" id="NP_001303908.1">
    <property type="nucleotide sequence ID" value="NM_001316979.2"/>
</dbReference>
<dbReference type="RefSeq" id="NP_001303909.1">
    <property type="nucleotide sequence ID" value="NM_001316980.1"/>
</dbReference>
<dbReference type="RefSeq" id="NP_001303910.1">
    <property type="nucleotide sequence ID" value="NM_001316981.2"/>
</dbReference>
<dbReference type="RefSeq" id="NP_001303911.1">
    <property type="nucleotide sequence ID" value="NM_001316982.2"/>
</dbReference>
<dbReference type="RefSeq" id="NP_116181.1">
    <property type="nucleotide sequence ID" value="NM_032792.4"/>
</dbReference>
<dbReference type="RefSeq" id="XP_006723508.1">
    <property type="nucleotide sequence ID" value="XM_006723445.4"/>
</dbReference>
<dbReference type="RefSeq" id="XP_054178401.1">
    <property type="nucleotide sequence ID" value="XM_054322426.1"/>
</dbReference>
<dbReference type="SMR" id="Q96K62"/>
<dbReference type="BioGRID" id="124322">
    <property type="interactions" value="8"/>
</dbReference>
<dbReference type="DIP" id="DIP-62048N"/>
<dbReference type="FunCoup" id="Q96K62">
    <property type="interactions" value="267"/>
</dbReference>
<dbReference type="IntAct" id="Q96K62">
    <property type="interactions" value="6"/>
</dbReference>
<dbReference type="STRING" id="9606.ENSP00000346603"/>
<dbReference type="GlyGen" id="Q96K62">
    <property type="glycosylation" value="3 sites"/>
</dbReference>
<dbReference type="iPTMnet" id="Q96K62"/>
<dbReference type="PhosphoSitePlus" id="Q96K62"/>
<dbReference type="BioMuta" id="ZBTB45"/>
<dbReference type="DMDM" id="45477325"/>
<dbReference type="jPOST" id="Q96K62"/>
<dbReference type="MassIVE" id="Q96K62"/>
<dbReference type="PaxDb" id="9606-ENSP00000469089"/>
<dbReference type="PeptideAtlas" id="Q96K62"/>
<dbReference type="ProteomicsDB" id="77044"/>
<dbReference type="Antibodypedia" id="19698">
    <property type="antibodies" value="78 antibodies from 19 providers"/>
</dbReference>
<dbReference type="DNASU" id="84878"/>
<dbReference type="Ensembl" id="ENST00000354590.7">
    <property type="protein sequence ID" value="ENSP00000346603.2"/>
    <property type="gene ID" value="ENSG00000119574.13"/>
</dbReference>
<dbReference type="Ensembl" id="ENST00000594051.6">
    <property type="protein sequence ID" value="ENSP00000469089.1"/>
    <property type="gene ID" value="ENSG00000119574.13"/>
</dbReference>
<dbReference type="Ensembl" id="ENST00000600990.1">
    <property type="protein sequence ID" value="ENSP00000473072.1"/>
    <property type="gene ID" value="ENSG00000119574.13"/>
</dbReference>
<dbReference type="GeneID" id="84878"/>
<dbReference type="KEGG" id="hsa:84878"/>
<dbReference type="MANE-Select" id="ENST00000594051.6">
    <property type="protein sequence ID" value="ENSP00000469089.1"/>
    <property type="RefSeq nucleotide sequence ID" value="NM_001316979.2"/>
    <property type="RefSeq protein sequence ID" value="NP_001303908.1"/>
</dbReference>
<dbReference type="UCSC" id="uc002qtd.3">
    <property type="organism name" value="human"/>
</dbReference>
<dbReference type="AGR" id="HGNC:23715"/>
<dbReference type="CTD" id="84878"/>
<dbReference type="DisGeNET" id="84878"/>
<dbReference type="GeneCards" id="ZBTB45"/>
<dbReference type="HGNC" id="HGNC:23715">
    <property type="gene designation" value="ZBTB45"/>
</dbReference>
<dbReference type="HPA" id="ENSG00000119574">
    <property type="expression patterns" value="Low tissue specificity"/>
</dbReference>
<dbReference type="neXtProt" id="NX_Q96K62"/>
<dbReference type="OpenTargets" id="ENSG00000119574"/>
<dbReference type="PharmGKB" id="PA162409464"/>
<dbReference type="VEuPathDB" id="HostDB:ENSG00000119574"/>
<dbReference type="eggNOG" id="KOG1721">
    <property type="taxonomic scope" value="Eukaryota"/>
</dbReference>
<dbReference type="GeneTree" id="ENSGT00940000160859"/>
<dbReference type="HOGENOM" id="CLU_019055_1_0_1"/>
<dbReference type="InParanoid" id="Q96K62"/>
<dbReference type="OMA" id="MVAWKGD"/>
<dbReference type="OrthoDB" id="10261408at2759"/>
<dbReference type="PAN-GO" id="Q96K62">
    <property type="GO annotations" value="4 GO annotations based on evolutionary models"/>
</dbReference>
<dbReference type="PhylomeDB" id="Q96K62"/>
<dbReference type="TreeFam" id="TF335684"/>
<dbReference type="PathwayCommons" id="Q96K62"/>
<dbReference type="SignaLink" id="Q96K62"/>
<dbReference type="BioGRID-ORCS" id="84878">
    <property type="hits" value="43 hits in 1211 CRISPR screens"/>
</dbReference>
<dbReference type="CD-CODE" id="B5B9A610">
    <property type="entry name" value="PML body"/>
</dbReference>
<dbReference type="ChiTaRS" id="ZBTB45">
    <property type="organism name" value="human"/>
</dbReference>
<dbReference type="GenomeRNAi" id="84878"/>
<dbReference type="Pharos" id="Q96K62">
    <property type="development level" value="Tdark"/>
</dbReference>
<dbReference type="PRO" id="PR:Q96K62"/>
<dbReference type="Proteomes" id="UP000005640">
    <property type="component" value="Chromosome 19"/>
</dbReference>
<dbReference type="RNAct" id="Q96K62">
    <property type="molecule type" value="protein"/>
</dbReference>
<dbReference type="Bgee" id="ENSG00000119574">
    <property type="expression patterns" value="Expressed in male germ line stem cell (sensu Vertebrata) in testis and 136 other cell types or tissues"/>
</dbReference>
<dbReference type="ExpressionAtlas" id="Q96K62">
    <property type="expression patterns" value="baseline and differential"/>
</dbReference>
<dbReference type="GO" id="GO:0005654">
    <property type="term" value="C:nucleoplasm"/>
    <property type="evidence" value="ECO:0000318"/>
    <property type="project" value="GO_Central"/>
</dbReference>
<dbReference type="GO" id="GO:0001227">
    <property type="term" value="F:DNA-binding transcription repressor activity, RNA polymerase II-specific"/>
    <property type="evidence" value="ECO:0000318"/>
    <property type="project" value="GO_Central"/>
</dbReference>
<dbReference type="GO" id="GO:0000978">
    <property type="term" value="F:RNA polymerase II cis-regulatory region sequence-specific DNA binding"/>
    <property type="evidence" value="ECO:0000318"/>
    <property type="project" value="GO_Central"/>
</dbReference>
<dbReference type="GO" id="GO:1990837">
    <property type="term" value="F:sequence-specific double-stranded DNA binding"/>
    <property type="evidence" value="ECO:0000314"/>
    <property type="project" value="ARUK-UCL"/>
</dbReference>
<dbReference type="GO" id="GO:0008270">
    <property type="term" value="F:zinc ion binding"/>
    <property type="evidence" value="ECO:0007669"/>
    <property type="project" value="UniProtKB-KW"/>
</dbReference>
<dbReference type="GO" id="GO:0000122">
    <property type="term" value="P:negative regulation of transcription by RNA polymerase II"/>
    <property type="evidence" value="ECO:0000318"/>
    <property type="project" value="GO_Central"/>
</dbReference>
<dbReference type="GO" id="GO:0007399">
    <property type="term" value="P:nervous system development"/>
    <property type="evidence" value="ECO:0007669"/>
    <property type="project" value="UniProtKB-KW"/>
</dbReference>
<dbReference type="GO" id="GO:0001817">
    <property type="term" value="P:regulation of cytokine production"/>
    <property type="evidence" value="ECO:0000318"/>
    <property type="project" value="GO_Central"/>
</dbReference>
<dbReference type="GO" id="GO:0002682">
    <property type="term" value="P:regulation of immune system process"/>
    <property type="evidence" value="ECO:0000318"/>
    <property type="project" value="GO_Central"/>
</dbReference>
<dbReference type="CDD" id="cd18229">
    <property type="entry name" value="BTB_POZ_ZBTB45"/>
    <property type="match status" value="1"/>
</dbReference>
<dbReference type="FunFam" id="3.30.160.60:FF:000304">
    <property type="entry name" value="Zinc finger and BTB domain-containing protein 20"/>
    <property type="match status" value="1"/>
</dbReference>
<dbReference type="FunFam" id="3.30.160.60:FF:000315">
    <property type="entry name" value="Zinc finger and BTB domain-containing protein 20"/>
    <property type="match status" value="1"/>
</dbReference>
<dbReference type="Gene3D" id="3.30.160.60">
    <property type="entry name" value="Classic Zinc Finger"/>
    <property type="match status" value="3"/>
</dbReference>
<dbReference type="Gene3D" id="3.30.710.10">
    <property type="entry name" value="Potassium Channel Kv1.1, Chain A"/>
    <property type="match status" value="1"/>
</dbReference>
<dbReference type="InterPro" id="IPR000210">
    <property type="entry name" value="BTB/POZ_dom"/>
</dbReference>
<dbReference type="InterPro" id="IPR011333">
    <property type="entry name" value="SKP1/BTB/POZ_sf"/>
</dbReference>
<dbReference type="InterPro" id="IPR036236">
    <property type="entry name" value="Znf_C2H2_sf"/>
</dbReference>
<dbReference type="InterPro" id="IPR013087">
    <property type="entry name" value="Znf_C2H2_type"/>
</dbReference>
<dbReference type="InterPro" id="IPR050457">
    <property type="entry name" value="ZnFinger_BTB_dom_contain"/>
</dbReference>
<dbReference type="PANTHER" id="PTHR46105">
    <property type="entry name" value="AGAP004733-PA"/>
    <property type="match status" value="1"/>
</dbReference>
<dbReference type="PANTHER" id="PTHR46105:SF22">
    <property type="entry name" value="ZINC FINGER AND BTB DOMAIN CONTAINING 45"/>
    <property type="match status" value="1"/>
</dbReference>
<dbReference type="Pfam" id="PF00651">
    <property type="entry name" value="BTB"/>
    <property type="match status" value="1"/>
</dbReference>
<dbReference type="Pfam" id="PF00096">
    <property type="entry name" value="zf-C2H2"/>
    <property type="match status" value="4"/>
</dbReference>
<dbReference type="SMART" id="SM00225">
    <property type="entry name" value="BTB"/>
    <property type="match status" value="1"/>
</dbReference>
<dbReference type="SMART" id="SM00355">
    <property type="entry name" value="ZnF_C2H2"/>
    <property type="match status" value="4"/>
</dbReference>
<dbReference type="SUPFAM" id="SSF57667">
    <property type="entry name" value="beta-beta-alpha zinc fingers"/>
    <property type="match status" value="2"/>
</dbReference>
<dbReference type="SUPFAM" id="SSF54695">
    <property type="entry name" value="POZ domain"/>
    <property type="match status" value="1"/>
</dbReference>
<dbReference type="PROSITE" id="PS50097">
    <property type="entry name" value="BTB"/>
    <property type="match status" value="1"/>
</dbReference>
<dbReference type="PROSITE" id="PS00028">
    <property type="entry name" value="ZINC_FINGER_C2H2_1"/>
    <property type="match status" value="4"/>
</dbReference>
<dbReference type="PROSITE" id="PS50157">
    <property type="entry name" value="ZINC_FINGER_C2H2_2"/>
    <property type="match status" value="4"/>
</dbReference>
<name>ZBT45_HUMAN</name>
<protein>
    <recommendedName>
        <fullName>Zinc finger and BTB domain-containing protein 45</fullName>
    </recommendedName>
    <alternativeName>
        <fullName>Zinc finger protein 499</fullName>
    </alternativeName>
</protein>
<keyword id="KW-0238">DNA-binding</keyword>
<keyword id="KW-0479">Metal-binding</keyword>
<keyword id="KW-0524">Neurogenesis</keyword>
<keyword id="KW-0539">Nucleus</keyword>
<keyword id="KW-1267">Proteomics identification</keyword>
<keyword id="KW-1185">Reference proteome</keyword>
<keyword id="KW-0677">Repeat</keyword>
<keyword id="KW-0804">Transcription</keyword>
<keyword id="KW-0805">Transcription regulation</keyword>
<keyword id="KW-0862">Zinc</keyword>
<keyword id="KW-0863">Zinc-finger</keyword>
<evidence type="ECO:0000250" key="1">
    <source>
        <dbReference type="UniProtKB" id="Q52KG4"/>
    </source>
</evidence>
<evidence type="ECO:0000255" key="2">
    <source>
        <dbReference type="PROSITE-ProRule" id="PRU00037"/>
    </source>
</evidence>
<evidence type="ECO:0000255" key="3">
    <source>
        <dbReference type="PROSITE-ProRule" id="PRU00042"/>
    </source>
</evidence>
<evidence type="ECO:0000256" key="4">
    <source>
        <dbReference type="SAM" id="MobiDB-lite"/>
    </source>
</evidence>
<evidence type="ECO:0000305" key="5"/>